<organism>
    <name type="scientific">Arabidopsis thaliana</name>
    <name type="common">Mouse-ear cress</name>
    <dbReference type="NCBI Taxonomy" id="3702"/>
    <lineage>
        <taxon>Eukaryota</taxon>
        <taxon>Viridiplantae</taxon>
        <taxon>Streptophyta</taxon>
        <taxon>Embryophyta</taxon>
        <taxon>Tracheophyta</taxon>
        <taxon>Spermatophyta</taxon>
        <taxon>Magnoliopsida</taxon>
        <taxon>eudicotyledons</taxon>
        <taxon>Gunneridae</taxon>
        <taxon>Pentapetalae</taxon>
        <taxon>rosids</taxon>
        <taxon>malvids</taxon>
        <taxon>Brassicales</taxon>
        <taxon>Brassicaceae</taxon>
        <taxon>Camelineae</taxon>
        <taxon>Arabidopsis</taxon>
    </lineage>
</organism>
<proteinExistence type="evidence at transcript level"/>
<protein>
    <recommendedName>
        <fullName>LOB domain-containing protein 10</fullName>
    </recommendedName>
    <alternativeName>
        <fullName>ASYMMETRIC LEAVES 2-like protein 2</fullName>
        <shortName>AS2-like protein 2</shortName>
    </alternativeName>
</protein>
<keyword id="KW-1185">Reference proteome</keyword>
<sequence length="311" mass="34780">MASTPCAACKLLRRKCTQECVFAPYFPPTNPQKFIFVHRVFGASNVTKILNDLPPDQREDTVNSLFYEAEARIRDPIYGCVGLISFLQQYLKKIQQDLLTAKEELVGYLGPDAVIPPPYLPPIGNNPPPNFMMSMEGMPPGVIPQGEPLMIREPNMSQQHHHQQPQDEQLQFIASDAQRMAAMMLERGDQQGMFNGYGIDNNGSVTATGFNQMDVNDQGAGGSLSGPSLALGSFGDAYQMGQETEHGHINHDQLQTQLMLQPPLQEGQEQTEEGQFLMQPMGQENLHDEEEEEELEPPVKWRMSENKEASF</sequence>
<evidence type="ECO:0000255" key="1">
    <source>
        <dbReference type="PROSITE-ProRule" id="PRU00291"/>
    </source>
</evidence>
<evidence type="ECO:0000256" key="2">
    <source>
        <dbReference type="SAM" id="MobiDB-lite"/>
    </source>
</evidence>
<evidence type="ECO:0000305" key="3"/>
<dbReference type="EMBL" id="AB473835">
    <property type="protein sequence ID" value="BAH10546.1"/>
    <property type="molecule type" value="mRNA"/>
</dbReference>
<dbReference type="EMBL" id="AC003040">
    <property type="protein sequence ID" value="AAM14865.1"/>
    <property type="molecule type" value="Genomic_DNA"/>
</dbReference>
<dbReference type="EMBL" id="AC004482">
    <property type="protein sequence ID" value="AAC17095.1"/>
    <property type="molecule type" value="Genomic_DNA"/>
</dbReference>
<dbReference type="EMBL" id="CP002685">
    <property type="protein sequence ID" value="AEC07476.1"/>
    <property type="molecule type" value="Genomic_DNA"/>
</dbReference>
<dbReference type="EMBL" id="CP002685">
    <property type="protein sequence ID" value="AEC07477.1"/>
    <property type="molecule type" value="Genomic_DNA"/>
</dbReference>
<dbReference type="EMBL" id="CP002685">
    <property type="protein sequence ID" value="ANM61638.1"/>
    <property type="molecule type" value="Genomic_DNA"/>
</dbReference>
<dbReference type="PIR" id="T01154">
    <property type="entry name" value="T01154"/>
</dbReference>
<dbReference type="RefSeq" id="NP_001154530.1">
    <property type="nucleotide sequence ID" value="NM_001161058.2"/>
</dbReference>
<dbReference type="RefSeq" id="NP_001323843.1">
    <property type="nucleotide sequence ID" value="NM_001335860.1"/>
</dbReference>
<dbReference type="RefSeq" id="NP_179946.1">
    <property type="nucleotide sequence ID" value="NM_127929.3"/>
</dbReference>
<dbReference type="SMR" id="O64836"/>
<dbReference type="BioGRID" id="2249">
    <property type="interactions" value="4"/>
</dbReference>
<dbReference type="IntAct" id="O64836">
    <property type="interactions" value="1"/>
</dbReference>
<dbReference type="STRING" id="3702.O64836"/>
<dbReference type="PaxDb" id="3702-AT2G23660.2"/>
<dbReference type="ProteomicsDB" id="250729"/>
<dbReference type="EnsemblPlants" id="AT2G23660.1">
    <property type="protein sequence ID" value="AT2G23660.1"/>
    <property type="gene ID" value="AT2G23660"/>
</dbReference>
<dbReference type="EnsemblPlants" id="AT2G23660.2">
    <property type="protein sequence ID" value="AT2G23660.2"/>
    <property type="gene ID" value="AT2G23660"/>
</dbReference>
<dbReference type="EnsemblPlants" id="AT2G23660.3">
    <property type="protein sequence ID" value="AT2G23660.3"/>
    <property type="gene ID" value="AT2G23660"/>
</dbReference>
<dbReference type="GeneID" id="816897"/>
<dbReference type="Gramene" id="AT2G23660.1">
    <property type="protein sequence ID" value="AT2G23660.1"/>
    <property type="gene ID" value="AT2G23660"/>
</dbReference>
<dbReference type="Gramene" id="AT2G23660.2">
    <property type="protein sequence ID" value="AT2G23660.2"/>
    <property type="gene ID" value="AT2G23660"/>
</dbReference>
<dbReference type="Gramene" id="AT2G23660.3">
    <property type="protein sequence ID" value="AT2G23660.3"/>
    <property type="gene ID" value="AT2G23660"/>
</dbReference>
<dbReference type="KEGG" id="ath:AT2G23660"/>
<dbReference type="Araport" id="AT2G23660"/>
<dbReference type="TAIR" id="AT2G23660">
    <property type="gene designation" value="LBD10"/>
</dbReference>
<dbReference type="eggNOG" id="ENOG502QSSJ">
    <property type="taxonomic scope" value="Eukaryota"/>
</dbReference>
<dbReference type="HOGENOM" id="CLU_058353_1_0_1"/>
<dbReference type="InParanoid" id="O64836"/>
<dbReference type="OMA" id="EPLMIRE"/>
<dbReference type="PhylomeDB" id="O64836"/>
<dbReference type="PRO" id="PR:O64836"/>
<dbReference type="Proteomes" id="UP000006548">
    <property type="component" value="Chromosome 2"/>
</dbReference>
<dbReference type="ExpressionAtlas" id="O64836">
    <property type="expression patterns" value="baseline and differential"/>
</dbReference>
<dbReference type="InterPro" id="IPR004883">
    <property type="entry name" value="LOB"/>
</dbReference>
<dbReference type="InterPro" id="IPR017414">
    <property type="entry name" value="LOBD"/>
</dbReference>
<dbReference type="PANTHER" id="PTHR31301:SF115">
    <property type="entry name" value="LOB DOMAIN-CONTAINING PROTEIN 10"/>
    <property type="match status" value="1"/>
</dbReference>
<dbReference type="PANTHER" id="PTHR31301">
    <property type="entry name" value="LOB DOMAIN-CONTAINING PROTEIN 4-RELATED"/>
    <property type="match status" value="1"/>
</dbReference>
<dbReference type="Pfam" id="PF03195">
    <property type="entry name" value="LOB"/>
    <property type="match status" value="1"/>
</dbReference>
<dbReference type="PIRSF" id="PIRSF038155">
    <property type="entry name" value="Protein_ASYMMETRIC_LEAVES"/>
    <property type="match status" value="1"/>
</dbReference>
<dbReference type="PROSITE" id="PS50891">
    <property type="entry name" value="LOB"/>
    <property type="match status" value="1"/>
</dbReference>
<feature type="chain" id="PRO_0000132261" description="LOB domain-containing protein 10">
    <location>
        <begin position="1"/>
        <end position="311"/>
    </location>
</feature>
<feature type="domain" description="LOB" evidence="1">
    <location>
        <begin position="4"/>
        <end position="105"/>
    </location>
</feature>
<feature type="region of interest" description="Disordered" evidence="2">
    <location>
        <begin position="264"/>
        <end position="311"/>
    </location>
</feature>
<feature type="compositionally biased region" description="Low complexity" evidence="2">
    <location>
        <begin position="264"/>
        <end position="277"/>
    </location>
</feature>
<feature type="compositionally biased region" description="Acidic residues" evidence="2">
    <location>
        <begin position="287"/>
        <end position="296"/>
    </location>
</feature>
<feature type="compositionally biased region" description="Basic and acidic residues" evidence="2">
    <location>
        <begin position="297"/>
        <end position="311"/>
    </location>
</feature>
<comment type="similarity">
    <text evidence="3">Belongs to the LOB domain-containing protein family.</text>
</comment>
<gene>
    <name type="primary">LBD10</name>
    <name type="synonym">ASL2</name>
    <name type="ordered locus">At2g23660</name>
    <name type="ORF">F26B6.31</name>
    <name type="ORF">F27L4.15</name>
</gene>
<accession>O64836</accession>
<accession>B7XG56</accession>
<reference key="1">
    <citation type="journal article" date="2009" name="Plant J.">
        <title>Characterization of genes in the ASYMMETRIC LEAVES2/LATERAL ORGAN BOUNDARIES (AS2/LOB) family in Arabidopsis thaliana, and functional and molecular comparisons between AS2 and other family members.</title>
        <authorList>
            <person name="Matsumura Y."/>
            <person name="Iwakawa H."/>
            <person name="Machida Y."/>
            <person name="Machida C."/>
        </authorList>
    </citation>
    <scope>NUCLEOTIDE SEQUENCE [MRNA]</scope>
    <source>
        <strain>cv. Columbia</strain>
    </source>
</reference>
<reference key="2">
    <citation type="journal article" date="1999" name="Nature">
        <title>Sequence and analysis of chromosome 2 of the plant Arabidopsis thaliana.</title>
        <authorList>
            <person name="Lin X."/>
            <person name="Kaul S."/>
            <person name="Rounsley S.D."/>
            <person name="Shea T.P."/>
            <person name="Benito M.-I."/>
            <person name="Town C.D."/>
            <person name="Fujii C.Y."/>
            <person name="Mason T.M."/>
            <person name="Bowman C.L."/>
            <person name="Barnstead M.E."/>
            <person name="Feldblyum T.V."/>
            <person name="Buell C.R."/>
            <person name="Ketchum K.A."/>
            <person name="Lee J.J."/>
            <person name="Ronning C.M."/>
            <person name="Koo H.L."/>
            <person name="Moffat K.S."/>
            <person name="Cronin L.A."/>
            <person name="Shen M."/>
            <person name="Pai G."/>
            <person name="Van Aken S."/>
            <person name="Umayam L."/>
            <person name="Tallon L.J."/>
            <person name="Gill J.E."/>
            <person name="Adams M.D."/>
            <person name="Carrera A.J."/>
            <person name="Creasy T.H."/>
            <person name="Goodman H.M."/>
            <person name="Somerville C.R."/>
            <person name="Copenhaver G.P."/>
            <person name="Preuss D."/>
            <person name="Nierman W.C."/>
            <person name="White O."/>
            <person name="Eisen J.A."/>
            <person name="Salzberg S.L."/>
            <person name="Fraser C.M."/>
            <person name="Venter J.C."/>
        </authorList>
    </citation>
    <scope>NUCLEOTIDE SEQUENCE [LARGE SCALE GENOMIC DNA]</scope>
    <source>
        <strain>cv. Columbia</strain>
    </source>
</reference>
<reference key="3">
    <citation type="journal article" date="2017" name="Plant J.">
        <title>Araport11: a complete reannotation of the Arabidopsis thaliana reference genome.</title>
        <authorList>
            <person name="Cheng C.Y."/>
            <person name="Krishnakumar V."/>
            <person name="Chan A.P."/>
            <person name="Thibaud-Nissen F."/>
            <person name="Schobel S."/>
            <person name="Town C.D."/>
        </authorList>
    </citation>
    <scope>GENOME REANNOTATION</scope>
    <source>
        <strain>cv. Columbia</strain>
    </source>
</reference>
<reference key="4">
    <citation type="journal article" date="2002" name="Plant Physiol.">
        <title>The LATERAL ORGAN BOUNDARIES gene defines a novel, plant-specific gene family.</title>
        <authorList>
            <person name="Shuai B."/>
            <person name="Reynaga-Pena C.G."/>
            <person name="Springer P.S."/>
        </authorList>
    </citation>
    <scope>GENE FAMILY</scope>
    <scope>NOMENCLATURE</scope>
</reference>
<reference key="5">
    <citation type="journal article" date="2002" name="Plant Cell Physiol.">
        <title>The ASYMMETRIC LEAVES2 gene of Arabidopsis thaliana, required for formation of a symmetric flat leaf lamina, encodes a member of a novel family of proteins characterized by cysteine repeats and a leucine zipper.</title>
        <authorList>
            <person name="Iwakawa H."/>
            <person name="Ueno Y."/>
            <person name="Semiarti E."/>
            <person name="Onouchi H."/>
            <person name="Kojima S."/>
            <person name="Tsukaya H."/>
            <person name="Hasebe M."/>
            <person name="Soma T."/>
            <person name="Ikezaki M."/>
            <person name="Machida C."/>
            <person name="Machida Y."/>
        </authorList>
    </citation>
    <scope>GENE FAMILY</scope>
    <scope>NOMENCLATURE</scope>
</reference>
<name>LBD10_ARATH</name>